<accession>Q9L391</accession>
<accession>E0SMH6</accession>
<feature type="chain" id="PRO_0000461772" description="Indigoidine synthase">
    <location>
        <begin position="1"/>
        <end position="1488"/>
    </location>
</feature>
<feature type="domain" description="Carrier" evidence="2">
    <location>
        <begin position="1137"/>
        <end position="1212"/>
    </location>
</feature>
<feature type="region of interest" description="Adenylation" evidence="5">
    <location>
        <begin position="229"/>
        <end position="585"/>
    </location>
</feature>
<feature type="region of interest" description="Thioesterase" evidence="5">
    <location>
        <begin position="1230"/>
        <end position="1346"/>
    </location>
</feature>
<feature type="modified residue" description="O-(pantetheine 4'-phosphoryl)serine" evidence="2">
    <location>
        <position position="1172"/>
    </location>
</feature>
<feature type="sequence conflict" description="In Ref. 1; CAB87990." evidence="5" ref="1">
    <original>E</original>
    <variation>Q</variation>
    <location>
        <position position="513"/>
    </location>
</feature>
<comment type="function">
    <text evidence="3">Nonribosomal peptide synthetase involved in the biosynthesis of the blue pigment indigoidine, which is implicated in pathogenicity and protection from oxidative stress (PubMed:11790734). Catalyzes the synthesis of the blue pigment using L-Gln as a substrate (PubMed:11790734). Two glutamine molecules are cyclized and oxidized to form indigoidine (PubMed:11790734).</text>
</comment>
<comment type="catalytic activity">
    <reaction evidence="6">
        <text>2 FMN + 2 L-glutamine + 2 ATP + O2 = indigoidine + 2 FMNH2 + 2 AMP + 2 diphosphate + 2 H2O</text>
        <dbReference type="Rhea" id="RHEA:81499"/>
        <dbReference type="ChEBI" id="CHEBI:15377"/>
        <dbReference type="ChEBI" id="CHEBI:15379"/>
        <dbReference type="ChEBI" id="CHEBI:30616"/>
        <dbReference type="ChEBI" id="CHEBI:33019"/>
        <dbReference type="ChEBI" id="CHEBI:57618"/>
        <dbReference type="ChEBI" id="CHEBI:58210"/>
        <dbReference type="ChEBI" id="CHEBI:58359"/>
        <dbReference type="ChEBI" id="CHEBI:79296"/>
        <dbReference type="ChEBI" id="CHEBI:456215"/>
        <dbReference type="EC" id="4.3.3.9"/>
    </reaction>
    <physiologicalReaction direction="left-to-right" evidence="6">
        <dbReference type="Rhea" id="RHEA:81500"/>
    </physiologicalReaction>
</comment>
<comment type="catalytic activity">
    <reaction evidence="1">
        <text>FMN + L-glutamine + ATP = 3-amino-1,5-dihydropyridine-2,6-dione + FMNH2 + AMP + diphosphate</text>
        <dbReference type="Rhea" id="RHEA:81503"/>
        <dbReference type="ChEBI" id="CHEBI:30616"/>
        <dbReference type="ChEBI" id="CHEBI:33019"/>
        <dbReference type="ChEBI" id="CHEBI:57618"/>
        <dbReference type="ChEBI" id="CHEBI:58210"/>
        <dbReference type="ChEBI" id="CHEBI:58359"/>
        <dbReference type="ChEBI" id="CHEBI:231893"/>
        <dbReference type="ChEBI" id="CHEBI:456215"/>
    </reaction>
    <physiologicalReaction direction="left-to-right" evidence="1">
        <dbReference type="Rhea" id="RHEA:81504"/>
    </physiologicalReaction>
</comment>
<comment type="catalytic activity">
    <reaction evidence="1">
        <text>2 3-amino-1,5-dihydropyridine-2,6-dione + O2 = indigoidine + 2 H2O</text>
        <dbReference type="Rhea" id="RHEA:81507"/>
        <dbReference type="ChEBI" id="CHEBI:15377"/>
        <dbReference type="ChEBI" id="CHEBI:15379"/>
        <dbReference type="ChEBI" id="CHEBI:79296"/>
        <dbReference type="ChEBI" id="CHEBI:231893"/>
    </reaction>
    <physiologicalReaction direction="left-to-right" evidence="1">
        <dbReference type="Rhea" id="RHEA:81508"/>
    </physiologicalReaction>
</comment>
<comment type="cofactor">
    <cofactor evidence="2">
        <name>pantetheine 4'-phosphate</name>
        <dbReference type="ChEBI" id="CHEBI:47942"/>
    </cofactor>
</comment>
<comment type="pathway">
    <text evidence="3">Pigment biosynthesis.</text>
</comment>
<comment type="induction">
    <text evidence="3">The basal level of expression is very low and is probably responsible for the absence of indigoidine production in the wild-type strain (PubMed:11790734). Expression is strongly repressed by the HTH-type transcriptional regulator PecS (PubMed:11790734). Weakly induced under oxidative stress (PubMed:11790734). Expression is 10-fold induced during infection of Saintpaulia plants (PubMed:11790734).</text>
</comment>
<comment type="domain">
    <text evidence="3">Contains only one module with an adenylation (A) domain, a thiolation (T) domain and a thioesterase (TE) domain at the C-terminal end (PubMed:11790734). Contains a putative oxidation (Ox) domain integrated into the adenylation domain (PubMed:11790734).</text>
</comment>
<comment type="similarity">
    <text evidence="5">Belongs to the ATP-dependent AMP-binding enzyme family.</text>
</comment>
<gene>
    <name evidence="4" type="primary">indC</name>
    <name evidence="7" type="ordered locus">Dda3937_00972</name>
</gene>
<dbReference type="EC" id="4.3.3.9" evidence="6"/>
<dbReference type="EMBL" id="AJ277403">
    <property type="protein sequence ID" value="CAB87990.1"/>
    <property type="molecule type" value="Genomic_DNA"/>
</dbReference>
<dbReference type="EMBL" id="CP002038">
    <property type="protein sequence ID" value="ADN00615.1"/>
    <property type="molecule type" value="Genomic_DNA"/>
</dbReference>
<dbReference type="RefSeq" id="WP_013320010.1">
    <property type="nucleotide sequence ID" value="NC_014500.1"/>
</dbReference>
<dbReference type="ESTHER" id="erwch-INDC">
    <property type="family name" value="Thioesterase"/>
</dbReference>
<dbReference type="KEGG" id="ag:CAB87990"/>
<dbReference type="KEGG" id="ddd:Dda3937_00972"/>
<dbReference type="eggNOG" id="COG1020">
    <property type="taxonomic scope" value="Bacteria"/>
</dbReference>
<dbReference type="eggNOG" id="COG3319">
    <property type="taxonomic scope" value="Bacteria"/>
</dbReference>
<dbReference type="HOGENOM" id="CLU_000022_2_13_6"/>
<dbReference type="OrthoDB" id="9757559at2"/>
<dbReference type="Proteomes" id="UP000006859">
    <property type="component" value="Chromosome"/>
</dbReference>
<dbReference type="GO" id="GO:0005737">
    <property type="term" value="C:cytoplasm"/>
    <property type="evidence" value="ECO:0007669"/>
    <property type="project" value="TreeGrafter"/>
</dbReference>
<dbReference type="GO" id="GO:0016829">
    <property type="term" value="F:lyase activity"/>
    <property type="evidence" value="ECO:0007669"/>
    <property type="project" value="UniProtKB-KW"/>
</dbReference>
<dbReference type="GO" id="GO:0016491">
    <property type="term" value="F:oxidoreductase activity"/>
    <property type="evidence" value="ECO:0007669"/>
    <property type="project" value="InterPro"/>
</dbReference>
<dbReference type="GO" id="GO:0031177">
    <property type="term" value="F:phosphopantetheine binding"/>
    <property type="evidence" value="ECO:0007669"/>
    <property type="project" value="InterPro"/>
</dbReference>
<dbReference type="GO" id="GO:0043041">
    <property type="term" value="P:amino acid activation for nonribosomal peptide biosynthetic process"/>
    <property type="evidence" value="ECO:0007669"/>
    <property type="project" value="TreeGrafter"/>
</dbReference>
<dbReference type="GO" id="GO:0044550">
    <property type="term" value="P:secondary metabolite biosynthetic process"/>
    <property type="evidence" value="ECO:0007669"/>
    <property type="project" value="TreeGrafter"/>
</dbReference>
<dbReference type="CDD" id="cd05930">
    <property type="entry name" value="A_NRPS"/>
    <property type="match status" value="1"/>
</dbReference>
<dbReference type="CDD" id="cd02142">
    <property type="entry name" value="McbC_SagB-like_oxidoreductase"/>
    <property type="match status" value="1"/>
</dbReference>
<dbReference type="FunFam" id="1.10.1200.10:FF:000016">
    <property type="entry name" value="Non-ribosomal peptide synthase"/>
    <property type="match status" value="1"/>
</dbReference>
<dbReference type="FunFam" id="3.40.50.12780:FF:000012">
    <property type="entry name" value="Non-ribosomal peptide synthetase"/>
    <property type="match status" value="1"/>
</dbReference>
<dbReference type="FunFam" id="3.40.50.980:FF:000001">
    <property type="entry name" value="Non-ribosomal peptide synthetase"/>
    <property type="match status" value="1"/>
</dbReference>
<dbReference type="FunFam" id="2.30.38.10:FF:000001">
    <property type="entry name" value="Non-ribosomal peptide synthetase PvdI"/>
    <property type="match status" value="1"/>
</dbReference>
<dbReference type="Gene3D" id="3.30.300.30">
    <property type="match status" value="2"/>
</dbReference>
<dbReference type="Gene3D" id="3.40.50.980">
    <property type="match status" value="2"/>
</dbReference>
<dbReference type="Gene3D" id="1.10.1200.10">
    <property type="entry name" value="ACP-like"/>
    <property type="match status" value="1"/>
</dbReference>
<dbReference type="Gene3D" id="3.40.50.1820">
    <property type="entry name" value="alpha/beta hydrolase"/>
    <property type="match status" value="1"/>
</dbReference>
<dbReference type="Gene3D" id="2.30.38.10">
    <property type="entry name" value="Luciferase, Domain 3"/>
    <property type="match status" value="1"/>
</dbReference>
<dbReference type="Gene3D" id="3.40.109.10">
    <property type="entry name" value="NADH Oxidase"/>
    <property type="match status" value="1"/>
</dbReference>
<dbReference type="Gene3D" id="3.30.559.30">
    <property type="entry name" value="Nonribosomal peptide synthetase, condensation domain"/>
    <property type="match status" value="1"/>
</dbReference>
<dbReference type="InterPro" id="IPR010071">
    <property type="entry name" value="AA_adenyl_dom"/>
</dbReference>
<dbReference type="InterPro" id="IPR029058">
    <property type="entry name" value="AB_hydrolase_fold"/>
</dbReference>
<dbReference type="InterPro" id="IPR036736">
    <property type="entry name" value="ACP-like_sf"/>
</dbReference>
<dbReference type="InterPro" id="IPR045851">
    <property type="entry name" value="AMP-bd_C_sf"/>
</dbReference>
<dbReference type="InterPro" id="IPR020845">
    <property type="entry name" value="AMP-binding_CS"/>
</dbReference>
<dbReference type="InterPro" id="IPR000873">
    <property type="entry name" value="AMP-dep_synth/lig_dom"/>
</dbReference>
<dbReference type="InterPro" id="IPR000415">
    <property type="entry name" value="Nitroreductase-like"/>
</dbReference>
<dbReference type="InterPro" id="IPR020806">
    <property type="entry name" value="PKS_PP-bd"/>
</dbReference>
<dbReference type="InterPro" id="IPR009081">
    <property type="entry name" value="PP-bd_ACP"/>
</dbReference>
<dbReference type="InterPro" id="IPR001031">
    <property type="entry name" value="Thioesterase"/>
</dbReference>
<dbReference type="NCBIfam" id="TIGR01733">
    <property type="entry name" value="AA-adenyl-dom"/>
    <property type="match status" value="1"/>
</dbReference>
<dbReference type="PANTHER" id="PTHR45527:SF1">
    <property type="entry name" value="FATTY ACID SYNTHASE"/>
    <property type="match status" value="1"/>
</dbReference>
<dbReference type="PANTHER" id="PTHR45527">
    <property type="entry name" value="NONRIBOSOMAL PEPTIDE SYNTHETASE"/>
    <property type="match status" value="1"/>
</dbReference>
<dbReference type="Pfam" id="PF00501">
    <property type="entry name" value="AMP-binding"/>
    <property type="match status" value="1"/>
</dbReference>
<dbReference type="Pfam" id="PF00550">
    <property type="entry name" value="PP-binding"/>
    <property type="match status" value="1"/>
</dbReference>
<dbReference type="Pfam" id="PF00975">
    <property type="entry name" value="Thioesterase"/>
    <property type="match status" value="1"/>
</dbReference>
<dbReference type="SMART" id="SM00823">
    <property type="entry name" value="PKS_PP"/>
    <property type="match status" value="1"/>
</dbReference>
<dbReference type="SUPFAM" id="SSF56801">
    <property type="entry name" value="Acetyl-CoA synthetase-like"/>
    <property type="match status" value="1"/>
</dbReference>
<dbReference type="SUPFAM" id="SSF47336">
    <property type="entry name" value="ACP-like"/>
    <property type="match status" value="1"/>
</dbReference>
<dbReference type="SUPFAM" id="SSF53474">
    <property type="entry name" value="alpha/beta-Hydrolases"/>
    <property type="match status" value="1"/>
</dbReference>
<dbReference type="SUPFAM" id="SSF52777">
    <property type="entry name" value="CoA-dependent acyltransferases"/>
    <property type="match status" value="1"/>
</dbReference>
<dbReference type="PROSITE" id="PS00455">
    <property type="entry name" value="AMP_BINDING"/>
    <property type="match status" value="1"/>
</dbReference>
<dbReference type="PROSITE" id="PS50075">
    <property type="entry name" value="CARRIER"/>
    <property type="match status" value="1"/>
</dbReference>
<keyword id="KW-0456">Lyase</keyword>
<keyword id="KW-0596">Phosphopantetheine</keyword>
<keyword id="KW-0597">Phosphoprotein</keyword>
<keyword id="KW-1185">Reference proteome</keyword>
<name>INDGS_DICD3</name>
<evidence type="ECO:0000250" key="1">
    <source>
        <dbReference type="UniProtKB" id="Q1MWN4"/>
    </source>
</evidence>
<evidence type="ECO:0000255" key="2">
    <source>
        <dbReference type="PROSITE-ProRule" id="PRU00258"/>
    </source>
</evidence>
<evidence type="ECO:0000269" key="3">
    <source>
    </source>
</evidence>
<evidence type="ECO:0000303" key="4">
    <source>
    </source>
</evidence>
<evidence type="ECO:0000305" key="5"/>
<evidence type="ECO:0000305" key="6">
    <source>
    </source>
</evidence>
<evidence type="ECO:0000312" key="7">
    <source>
        <dbReference type="EMBL" id="ADN00615.1"/>
    </source>
</evidence>
<evidence type="ECO:0000312" key="8">
    <source>
        <dbReference type="EMBL" id="CAB87990.1"/>
    </source>
</evidence>
<reference evidence="8" key="1">
    <citation type="journal article" date="2002" name="J. Bacteriol.">
        <title>Characterization of indigoidine biosynthetic genes in Erwinia chrysanthemi and role of this blue pigment in pathogenicity.</title>
        <authorList>
            <person name="Reverchon S."/>
            <person name="Rouanet C."/>
            <person name="Expert D."/>
            <person name="Nasser W."/>
        </authorList>
    </citation>
    <scope>NUCLEOTIDE SEQUENCE [GENOMIC DNA]</scope>
    <scope>FUNCTION AS AN INDIGOIDINE SYNTHASE</scope>
    <scope>PATHWAY</scope>
    <scope>INDUCTION</scope>
    <scope>DOMAIN</scope>
    <source>
        <strain>3937</strain>
    </source>
</reference>
<reference evidence="7" key="2">
    <citation type="journal article" date="2011" name="J. Bacteriol.">
        <title>Genome sequence of the plant-pathogenic bacterium Dickeya dadantii 3937.</title>
        <authorList>
            <person name="Glasner J.D."/>
            <person name="Yang C.H."/>
            <person name="Reverchon S."/>
            <person name="Hugouvieux-Cotte-Pattat N."/>
            <person name="Condemine G."/>
            <person name="Bohin J.P."/>
            <person name="Van Gijsegem F."/>
            <person name="Yang S."/>
            <person name="Franza T."/>
            <person name="Expert D."/>
            <person name="Plunkett G. III"/>
            <person name="San Francisco M.J."/>
            <person name="Charkowski A.O."/>
            <person name="Py B."/>
            <person name="Bell K."/>
            <person name="Rauscher L."/>
            <person name="Rodriguez-Palenzuela P."/>
            <person name="Toussaint A."/>
            <person name="Holeva M.C."/>
            <person name="He S.Y."/>
            <person name="Douet V."/>
            <person name="Boccara M."/>
            <person name="Blanco C."/>
            <person name="Toth I."/>
            <person name="Anderson B.D."/>
            <person name="Biehl B.S."/>
            <person name="Mau B."/>
            <person name="Flynn S.M."/>
            <person name="Barras F."/>
            <person name="Lindeberg M."/>
            <person name="Birch P.R."/>
            <person name="Tsuyumu S."/>
            <person name="Shi X."/>
            <person name="Hibbing M."/>
            <person name="Yap M.N."/>
            <person name="Carpentier M."/>
            <person name="Dassa E."/>
            <person name="Umehara M."/>
            <person name="Kim J.F."/>
            <person name="Rusch M."/>
            <person name="Soni P."/>
            <person name="Mayhew G.F."/>
            <person name="Fouts D.E."/>
            <person name="Gill S.R."/>
            <person name="Blattner F.R."/>
            <person name="Keen N.T."/>
            <person name="Perna N.T."/>
        </authorList>
    </citation>
    <scope>NUCLEOTIDE SEQUENCE [LARGE SCALE GENOMIC DNA]</scope>
    <source>
        <strain>3937</strain>
    </source>
</reference>
<protein>
    <recommendedName>
        <fullName evidence="5">Indigoidine synthase</fullName>
        <ecNumber evidence="6">4.3.3.9</ecNumber>
    </recommendedName>
</protein>
<proteinExistence type="evidence at protein level"/>
<organism>
    <name type="scientific">Dickeya dadantii (strain 3937)</name>
    <name type="common">Erwinia chrysanthemi (strain 3937)</name>
    <dbReference type="NCBI Taxonomy" id="198628"/>
    <lineage>
        <taxon>Bacteria</taxon>
        <taxon>Pseudomonadati</taxon>
        <taxon>Pseudomonadota</taxon>
        <taxon>Gammaproteobacteria</taxon>
        <taxon>Enterobacterales</taxon>
        <taxon>Pectobacteriaceae</taxon>
        <taxon>Dickeya</taxon>
    </lineage>
</organism>
<sequence>MDNISNHAFNYPVLVLNKGLLPEHDDIALARYLFSALALAVSRITQNEEMIVGFHLHPQEITRWKDDECIRQYILPLNIRFNSATPIAGFIREIMTWMTPDAIHQKNAMGASVLTLGPQHALHDIFDLEISWQPPVESEPVQALTCHVASREDALVLTLRFNPARFSATQMQKLPEVWRQITASAAKNGAETLRDIGLIDDAERQRVLHAFNQTEQAWDGETTVAARLKNRAQRHPEQTAVVFRDETLSYRQLYQQAGALAHYLNALETERERCVGLFVEPSLTLMTGVWGILLSGNAYLPLSPEYPEDRLAYMLENSQTRIIVTQPHLRERLLALAPPGIQVVTSDDVDAFMRQHAHSLPDAPQNDIAPHHLAYVIYTSGSTGKPKGVMIEHHSVLNQMNWLAQTVGLNQETVILQKTPMSFDAAQWEILSPACGCRVVMGEPGVYRNPEQLVDMLAEYRVTTLQCVPTLLQALLDTERLTHCPALRQIFSGGEALQKHLAQACLETLPDCELINLYGPTECTINNSAFRVDPVSVRQGPDTLSIGAPVANTRYYILDNCLTPVAVGQIGELYIGGDGVARGYLNRDDLTAERFIVDPFAPAGSGRRLYQTGDIASWNPDGTVQYAGRADNQVKLRGYRVELDEIRSAIETHEWVKAAAVIVRNDPFTGYQNLISFIELNAREAALMDQGNHGSHHQSKADKAQVMLQLANKGCREFPAASQPYTLDLPGKQPDEKQRLTAFSRKTYRFYDGGAVSREDILSLLHEPLLTAISRQPDALTLDELGHWLRYLGQFTSAERLLPKYTYASPGALYATQVFLELNGVAGLTAGHYYYQPVHHQLVRVSEQAAVTPGSLRLHFVGKKSAIEPIYKNNIREVLQMEMGHIIGMLDIILPDYGLGVALCDAAALDPTPLAIDLDDDYLGACDVLSGPRLPTDDDLDIYVQTAGANIADLPVGTYRYVRGDLQHIADDVIDKKHVIAINQAVYERSSFGISVASRTEGWAGYVHVGRKLQRLQMNPLNIGLMSSGYSSETGNDLPAARRFWQILGHRTGPYYFFIGGRISDEQKYSEGMREDAVHMKGPAEMIRDDLAAFMPDYMMPNKVLILDEMPLTANGKIDMKALANINVELKHKTIVAPRNPLEHQVMAIWQAKLKREEMSVDDNFFESGGNSLIAVSLINELNATLNASLPLQVLFQAPTVEKLAAWLSRARREPVSRLVQLQPKGRQAPIYCWPGLGGYCMNLRLLARQLGAERPFFGIQAHGINPDETPYATIGEMAARDIELIRQHQPHGPYTLWGYSFGARVAFETAWQLELAGEVVENLYLLAPGSPKLRDERVAAMNRKADFDNPGYLTILFSVFIGSITDPELERCLETVRDEESFVAFITGLNPALDDGLVRRITRIVAQTFEFTYTFSELQQRQLNAPVTIIKAQGDDYSFIENHGGFSAQPPTVLELMADHYSMLKAPGIDELTSVIQYQQSPPSLVG</sequence>